<sequence>MTKEIVTKAQERFEQSHQSLSREFAGIRAGRANASLLDRIQVEYYGAPTPLNQLASITVPEARVLLISPFDKSSIKDIERAINESDLGINPANDGSVIRLVIPALTEETRRDLAKEVKKVGENAKIAIRNIRRDAMDEAKKQEKNKEITEDDLKSLEKDIQKATDDAVKHIDEMTANKEKELLEV</sequence>
<proteinExistence type="inferred from homology"/>
<evidence type="ECO:0000255" key="1">
    <source>
        <dbReference type="HAMAP-Rule" id="MF_00040"/>
    </source>
</evidence>
<organism>
    <name type="scientific">Streptococcus agalactiae serotype V (strain ATCC BAA-611 / 2603 V/R)</name>
    <dbReference type="NCBI Taxonomy" id="208435"/>
    <lineage>
        <taxon>Bacteria</taxon>
        <taxon>Bacillati</taxon>
        <taxon>Bacillota</taxon>
        <taxon>Bacilli</taxon>
        <taxon>Lactobacillales</taxon>
        <taxon>Streptococcaceae</taxon>
        <taxon>Streptococcus</taxon>
    </lineage>
</organism>
<comment type="function">
    <text evidence="1">Responsible for the release of ribosomes from messenger RNA at the termination of protein biosynthesis. May increase the efficiency of translation by recycling ribosomes from one round of translation to another.</text>
</comment>
<comment type="subcellular location">
    <subcellularLocation>
        <location evidence="1">Cytoplasm</location>
    </subcellularLocation>
</comment>
<comment type="similarity">
    <text evidence="1">Belongs to the RRF family.</text>
</comment>
<keyword id="KW-0963">Cytoplasm</keyword>
<keyword id="KW-0648">Protein biosynthesis</keyword>
<keyword id="KW-1185">Reference proteome</keyword>
<accession>P66741</accession>
<accession>Q8DYG9</accession>
<accession>Q8E432</accession>
<feature type="chain" id="PRO_0000167548" description="Ribosome-recycling factor">
    <location>
        <begin position="1"/>
        <end position="185"/>
    </location>
</feature>
<name>RRF_STRA5</name>
<dbReference type="EMBL" id="AE009948">
    <property type="protein sequence ID" value="AAN00379.1"/>
    <property type="molecule type" value="Genomic_DNA"/>
</dbReference>
<dbReference type="RefSeq" id="NP_688506.1">
    <property type="nucleotide sequence ID" value="NC_004116.1"/>
</dbReference>
<dbReference type="RefSeq" id="WP_000159519.1">
    <property type="nucleotide sequence ID" value="NC_004116.1"/>
</dbReference>
<dbReference type="SMR" id="P66741"/>
<dbReference type="STRING" id="208435.SAG1512"/>
<dbReference type="GeneID" id="66886367"/>
<dbReference type="KEGG" id="sag:SAG1512"/>
<dbReference type="PATRIC" id="fig|208435.3.peg.1521"/>
<dbReference type="HOGENOM" id="CLU_073981_2_0_9"/>
<dbReference type="OrthoDB" id="9804006at2"/>
<dbReference type="Proteomes" id="UP000000821">
    <property type="component" value="Chromosome"/>
</dbReference>
<dbReference type="GO" id="GO:0005737">
    <property type="term" value="C:cytoplasm"/>
    <property type="evidence" value="ECO:0007669"/>
    <property type="project" value="UniProtKB-SubCell"/>
</dbReference>
<dbReference type="GO" id="GO:0043023">
    <property type="term" value="F:ribosomal large subunit binding"/>
    <property type="evidence" value="ECO:0007669"/>
    <property type="project" value="TreeGrafter"/>
</dbReference>
<dbReference type="GO" id="GO:0006415">
    <property type="term" value="P:translational termination"/>
    <property type="evidence" value="ECO:0007669"/>
    <property type="project" value="UniProtKB-UniRule"/>
</dbReference>
<dbReference type="CDD" id="cd00520">
    <property type="entry name" value="RRF"/>
    <property type="match status" value="1"/>
</dbReference>
<dbReference type="FunFam" id="1.10.132.20:FF:000001">
    <property type="entry name" value="Ribosome-recycling factor"/>
    <property type="match status" value="1"/>
</dbReference>
<dbReference type="FunFam" id="3.30.1360.40:FF:000001">
    <property type="entry name" value="Ribosome-recycling factor"/>
    <property type="match status" value="1"/>
</dbReference>
<dbReference type="Gene3D" id="3.30.1360.40">
    <property type="match status" value="1"/>
</dbReference>
<dbReference type="Gene3D" id="1.10.132.20">
    <property type="entry name" value="Ribosome-recycling factor"/>
    <property type="match status" value="1"/>
</dbReference>
<dbReference type="HAMAP" id="MF_00040">
    <property type="entry name" value="RRF"/>
    <property type="match status" value="1"/>
</dbReference>
<dbReference type="InterPro" id="IPR002661">
    <property type="entry name" value="Ribosome_recyc_fac"/>
</dbReference>
<dbReference type="InterPro" id="IPR023584">
    <property type="entry name" value="Ribosome_recyc_fac_dom"/>
</dbReference>
<dbReference type="InterPro" id="IPR036191">
    <property type="entry name" value="RRF_sf"/>
</dbReference>
<dbReference type="NCBIfam" id="TIGR00496">
    <property type="entry name" value="frr"/>
    <property type="match status" value="1"/>
</dbReference>
<dbReference type="PANTHER" id="PTHR20982:SF3">
    <property type="entry name" value="MITOCHONDRIAL RIBOSOME RECYCLING FACTOR PSEUDO 1"/>
    <property type="match status" value="1"/>
</dbReference>
<dbReference type="PANTHER" id="PTHR20982">
    <property type="entry name" value="RIBOSOME RECYCLING FACTOR"/>
    <property type="match status" value="1"/>
</dbReference>
<dbReference type="Pfam" id="PF01765">
    <property type="entry name" value="RRF"/>
    <property type="match status" value="1"/>
</dbReference>
<dbReference type="SUPFAM" id="SSF55194">
    <property type="entry name" value="Ribosome recycling factor, RRF"/>
    <property type="match status" value="1"/>
</dbReference>
<gene>
    <name evidence="1" type="primary">frr</name>
    <name type="ordered locus">SAG1512</name>
</gene>
<reference key="1">
    <citation type="journal article" date="2002" name="Proc. Natl. Acad. Sci. U.S.A.">
        <title>Complete genome sequence and comparative genomic analysis of an emerging human pathogen, serotype V Streptococcus agalactiae.</title>
        <authorList>
            <person name="Tettelin H."/>
            <person name="Masignani V."/>
            <person name="Cieslewicz M.J."/>
            <person name="Eisen J.A."/>
            <person name="Peterson S.N."/>
            <person name="Wessels M.R."/>
            <person name="Paulsen I.T."/>
            <person name="Nelson K.E."/>
            <person name="Margarit I."/>
            <person name="Read T.D."/>
            <person name="Madoff L.C."/>
            <person name="Wolf A.M."/>
            <person name="Beanan M.J."/>
            <person name="Brinkac L.M."/>
            <person name="Daugherty S.C."/>
            <person name="DeBoy R.T."/>
            <person name="Durkin A.S."/>
            <person name="Kolonay J.F."/>
            <person name="Madupu R."/>
            <person name="Lewis M.R."/>
            <person name="Radune D."/>
            <person name="Fedorova N.B."/>
            <person name="Scanlan D."/>
            <person name="Khouri H.M."/>
            <person name="Mulligan S."/>
            <person name="Carty H.A."/>
            <person name="Cline R.T."/>
            <person name="Van Aken S.E."/>
            <person name="Gill J."/>
            <person name="Scarselli M."/>
            <person name="Mora M."/>
            <person name="Iacobini E.T."/>
            <person name="Brettoni C."/>
            <person name="Galli G."/>
            <person name="Mariani M."/>
            <person name="Vegni F."/>
            <person name="Maione D."/>
            <person name="Rinaudo D."/>
            <person name="Rappuoli R."/>
            <person name="Telford J.L."/>
            <person name="Kasper D.L."/>
            <person name="Grandi G."/>
            <person name="Fraser C.M."/>
        </authorList>
    </citation>
    <scope>NUCLEOTIDE SEQUENCE [LARGE SCALE GENOMIC DNA]</scope>
    <source>
        <strain>ATCC BAA-611 / 2603 V/R</strain>
    </source>
</reference>
<protein>
    <recommendedName>
        <fullName evidence="1">Ribosome-recycling factor</fullName>
        <shortName evidence="1">RRF</shortName>
    </recommendedName>
    <alternativeName>
        <fullName evidence="1">Ribosome-releasing factor</fullName>
    </alternativeName>
</protein>